<comment type="function">
    <text evidence="1">ATP-dependent RNA helicase involved in mRNA turnover, and more specifically in mRNA decapping. Is involved in G1/S DNA-damage checkpoint recovery, probably through the regulation of the translational status of a subset of mRNAs. May also have a role in translation and mRNA nuclear export (By similarity).</text>
</comment>
<comment type="catalytic activity">
    <reaction>
        <text>ATP + H2O = ADP + phosphate + H(+)</text>
        <dbReference type="Rhea" id="RHEA:13065"/>
        <dbReference type="ChEBI" id="CHEBI:15377"/>
        <dbReference type="ChEBI" id="CHEBI:15378"/>
        <dbReference type="ChEBI" id="CHEBI:30616"/>
        <dbReference type="ChEBI" id="CHEBI:43474"/>
        <dbReference type="ChEBI" id="CHEBI:456216"/>
        <dbReference type="EC" id="3.6.4.13"/>
    </reaction>
</comment>
<comment type="subcellular location">
    <subcellularLocation>
        <location evidence="1">Cytoplasm</location>
        <location evidence="1">P-body</location>
    </subcellularLocation>
    <text evidence="1">Is concentrated in several cytoplasmic foci called P bodies (or cytoplasmic processing bodies) which represent sites of mRNA decapping and 5' to 3' exonucleotidic decay.</text>
</comment>
<comment type="domain">
    <text>The Q motif is unique to and characteristic of the DEAD box family of RNA helicases and controls ATP binding and hydrolysis.</text>
</comment>
<comment type="similarity">
    <text evidence="5">Belongs to the DEAD box helicase family. DDX6/DHH1 subfamily.</text>
</comment>
<comment type="sequence caution" evidence="5">
    <conflict type="erroneous gene model prediction">
        <sequence resource="EMBL-CDS" id="EAT80597"/>
    </conflict>
</comment>
<accession>Q0U7S9</accession>
<evidence type="ECO:0000250" key="1"/>
<evidence type="ECO:0000255" key="2">
    <source>
        <dbReference type="PROSITE-ProRule" id="PRU00541"/>
    </source>
</evidence>
<evidence type="ECO:0000255" key="3">
    <source>
        <dbReference type="PROSITE-ProRule" id="PRU00542"/>
    </source>
</evidence>
<evidence type="ECO:0000256" key="4">
    <source>
        <dbReference type="SAM" id="MobiDB-lite"/>
    </source>
</evidence>
<evidence type="ECO:0000305" key="5"/>
<keyword id="KW-0067">ATP-binding</keyword>
<keyword id="KW-0963">Cytoplasm</keyword>
<keyword id="KW-0347">Helicase</keyword>
<keyword id="KW-0378">Hydrolase</keyword>
<keyword id="KW-0507">mRNA processing</keyword>
<keyword id="KW-0509">mRNA transport</keyword>
<keyword id="KW-0547">Nucleotide-binding</keyword>
<keyword id="KW-0694">RNA-binding</keyword>
<keyword id="KW-0810">Translation regulation</keyword>
<keyword id="KW-0813">Transport</keyword>
<reference key="1">
    <citation type="journal article" date="2007" name="Plant Cell">
        <title>Dothideomycete-plant interactions illuminated by genome sequencing and EST analysis of the wheat pathogen Stagonospora nodorum.</title>
        <authorList>
            <person name="Hane J.K."/>
            <person name="Lowe R.G.T."/>
            <person name="Solomon P.S."/>
            <person name="Tan K.-C."/>
            <person name="Schoch C.L."/>
            <person name="Spatafora J.W."/>
            <person name="Crous P.W."/>
            <person name="Kodira C.D."/>
            <person name="Birren B.W."/>
            <person name="Galagan J.E."/>
            <person name="Torriani S.F.F."/>
            <person name="McDonald B.A."/>
            <person name="Oliver R.P."/>
        </authorList>
    </citation>
    <scope>NUCLEOTIDE SEQUENCE [LARGE SCALE GENOMIC DNA]</scope>
    <source>
        <strain>SN15 / ATCC MYA-4574 / FGSC 10173</strain>
    </source>
</reference>
<organism>
    <name type="scientific">Phaeosphaeria nodorum (strain SN15 / ATCC MYA-4574 / FGSC 10173)</name>
    <name type="common">Glume blotch fungus</name>
    <name type="synonym">Parastagonospora nodorum</name>
    <dbReference type="NCBI Taxonomy" id="321614"/>
    <lineage>
        <taxon>Eukaryota</taxon>
        <taxon>Fungi</taxon>
        <taxon>Dikarya</taxon>
        <taxon>Ascomycota</taxon>
        <taxon>Pezizomycotina</taxon>
        <taxon>Dothideomycetes</taxon>
        <taxon>Pleosporomycetidae</taxon>
        <taxon>Pleosporales</taxon>
        <taxon>Pleosporineae</taxon>
        <taxon>Phaeosphaeriaceae</taxon>
        <taxon>Parastagonospora</taxon>
    </lineage>
</organism>
<dbReference type="EC" id="3.6.4.13"/>
<dbReference type="EMBL" id="CH445345">
    <property type="protein sequence ID" value="EAT80597.2"/>
    <property type="status" value="ALT_SEQ"/>
    <property type="molecule type" value="Genomic_DNA"/>
</dbReference>
<dbReference type="RefSeq" id="XP_001802414.1">
    <property type="nucleotide sequence ID" value="XM_001802362.1"/>
</dbReference>
<dbReference type="SMR" id="Q0U7S9"/>
<dbReference type="FunCoup" id="Q0U7S9">
    <property type="interactions" value="1216"/>
</dbReference>
<dbReference type="STRING" id="321614.Q0U7S9"/>
<dbReference type="GeneID" id="5979324"/>
<dbReference type="KEGG" id="pno:SNOG_12185"/>
<dbReference type="VEuPathDB" id="FungiDB:JI435_121850"/>
<dbReference type="eggNOG" id="KOG0326">
    <property type="taxonomic scope" value="Eukaryota"/>
</dbReference>
<dbReference type="InParanoid" id="Q0U7S9"/>
<dbReference type="OMA" id="PRDHQMI"/>
<dbReference type="OrthoDB" id="10265785at2759"/>
<dbReference type="Proteomes" id="UP000001055">
    <property type="component" value="Unassembled WGS sequence"/>
</dbReference>
<dbReference type="GO" id="GO:0010494">
    <property type="term" value="C:cytoplasmic stress granule"/>
    <property type="evidence" value="ECO:0000318"/>
    <property type="project" value="GO_Central"/>
</dbReference>
<dbReference type="GO" id="GO:0000932">
    <property type="term" value="C:P-body"/>
    <property type="evidence" value="ECO:0000318"/>
    <property type="project" value="GO_Central"/>
</dbReference>
<dbReference type="GO" id="GO:0005524">
    <property type="term" value="F:ATP binding"/>
    <property type="evidence" value="ECO:0007669"/>
    <property type="project" value="UniProtKB-KW"/>
</dbReference>
<dbReference type="GO" id="GO:0016887">
    <property type="term" value="F:ATP hydrolysis activity"/>
    <property type="evidence" value="ECO:0007669"/>
    <property type="project" value="RHEA"/>
</dbReference>
<dbReference type="GO" id="GO:0003729">
    <property type="term" value="F:mRNA binding"/>
    <property type="evidence" value="ECO:0000318"/>
    <property type="project" value="GO_Central"/>
</dbReference>
<dbReference type="GO" id="GO:0003724">
    <property type="term" value="F:RNA helicase activity"/>
    <property type="evidence" value="ECO:0007669"/>
    <property type="project" value="UniProtKB-EC"/>
</dbReference>
<dbReference type="GO" id="GO:0006397">
    <property type="term" value="P:mRNA processing"/>
    <property type="evidence" value="ECO:0007669"/>
    <property type="project" value="UniProtKB-KW"/>
</dbReference>
<dbReference type="GO" id="GO:0051028">
    <property type="term" value="P:mRNA transport"/>
    <property type="evidence" value="ECO:0007669"/>
    <property type="project" value="UniProtKB-KW"/>
</dbReference>
<dbReference type="GO" id="GO:0017148">
    <property type="term" value="P:negative regulation of translation"/>
    <property type="evidence" value="ECO:0000318"/>
    <property type="project" value="GO_Central"/>
</dbReference>
<dbReference type="GO" id="GO:0033962">
    <property type="term" value="P:P-body assembly"/>
    <property type="evidence" value="ECO:0000318"/>
    <property type="project" value="GO_Central"/>
</dbReference>
<dbReference type="GO" id="GO:0034063">
    <property type="term" value="P:stress granule assembly"/>
    <property type="evidence" value="ECO:0000318"/>
    <property type="project" value="GO_Central"/>
</dbReference>
<dbReference type="CDD" id="cd17940">
    <property type="entry name" value="DEADc_DDX6"/>
    <property type="match status" value="1"/>
</dbReference>
<dbReference type="CDD" id="cd18787">
    <property type="entry name" value="SF2_C_DEAD"/>
    <property type="match status" value="1"/>
</dbReference>
<dbReference type="FunFam" id="3.40.50.300:FF:000114">
    <property type="entry name" value="ATP-dependent RNA helicase DDX6"/>
    <property type="match status" value="1"/>
</dbReference>
<dbReference type="FunFam" id="3.40.50.300:FF:000364">
    <property type="entry name" value="ATP-dependent RNA helicase DDX6"/>
    <property type="match status" value="1"/>
</dbReference>
<dbReference type="Gene3D" id="3.40.50.300">
    <property type="entry name" value="P-loop containing nucleotide triphosphate hydrolases"/>
    <property type="match status" value="2"/>
</dbReference>
<dbReference type="InterPro" id="IPR011545">
    <property type="entry name" value="DEAD/DEAH_box_helicase_dom"/>
</dbReference>
<dbReference type="InterPro" id="IPR014001">
    <property type="entry name" value="Helicase_ATP-bd"/>
</dbReference>
<dbReference type="InterPro" id="IPR001650">
    <property type="entry name" value="Helicase_C-like"/>
</dbReference>
<dbReference type="InterPro" id="IPR027417">
    <property type="entry name" value="P-loop_NTPase"/>
</dbReference>
<dbReference type="InterPro" id="IPR000629">
    <property type="entry name" value="RNA-helicase_DEAD-box_CS"/>
</dbReference>
<dbReference type="InterPro" id="IPR014014">
    <property type="entry name" value="RNA_helicase_DEAD_Q_motif"/>
</dbReference>
<dbReference type="PANTHER" id="PTHR47960">
    <property type="entry name" value="DEAD-BOX ATP-DEPENDENT RNA HELICASE 50"/>
    <property type="match status" value="1"/>
</dbReference>
<dbReference type="Pfam" id="PF00270">
    <property type="entry name" value="DEAD"/>
    <property type="match status" value="1"/>
</dbReference>
<dbReference type="Pfam" id="PF00271">
    <property type="entry name" value="Helicase_C"/>
    <property type="match status" value="1"/>
</dbReference>
<dbReference type="SMART" id="SM00487">
    <property type="entry name" value="DEXDc"/>
    <property type="match status" value="1"/>
</dbReference>
<dbReference type="SMART" id="SM00490">
    <property type="entry name" value="HELICc"/>
    <property type="match status" value="1"/>
</dbReference>
<dbReference type="SUPFAM" id="SSF52540">
    <property type="entry name" value="P-loop containing nucleoside triphosphate hydrolases"/>
    <property type="match status" value="1"/>
</dbReference>
<dbReference type="PROSITE" id="PS00039">
    <property type="entry name" value="DEAD_ATP_HELICASE"/>
    <property type="match status" value="1"/>
</dbReference>
<dbReference type="PROSITE" id="PS51192">
    <property type="entry name" value="HELICASE_ATP_BIND_1"/>
    <property type="match status" value="1"/>
</dbReference>
<dbReference type="PROSITE" id="PS51194">
    <property type="entry name" value="HELICASE_CTER"/>
    <property type="match status" value="1"/>
</dbReference>
<dbReference type="PROSITE" id="PS51195">
    <property type="entry name" value="Q_MOTIF"/>
    <property type="match status" value="1"/>
</dbReference>
<protein>
    <recommendedName>
        <fullName>ATP-dependent RNA helicase DHH1</fullName>
        <ecNumber>3.6.4.13</ecNumber>
    </recommendedName>
</protein>
<sequence length="522" mass="58158">MTSEITNQMASTKLSDASASTLADWKEGLKAPAKDARPQTEDVTATKGLEFEDFFIKRELMMGIFEAGFEKPSPIQEETIPVALTGRDILARAKNGTGKTAAFVIPTLERVNPKISKTQALILVPTRELALQTSQVCKTLGKHLGINVMVSTGGTGLKDDIIRLSDPVHIIVGTPGRILDLAGKGVADLSTCQTFVMDEADKLLSPEFTPVVEQLLGFHPKDRQVMLFSATFPIVVKTFKDKHMNSPYEINLMDELTLRGITQYYAFVEEKQKVHCLNTLFNKLQINQSIIFCNSTNRVELLAKKITELGYSCFYSHARMLQHNRNRVFHDFRNGVCRNLVCSDLLTRGIDIQAVNVVINFDFPKNAETYLHRIGRSGRFGHLGLAINLINWEDRFNLYRIEQELGTEIQPIPQVIEKNLYVYESPENIPRPISSSQRQPGQQQEQDGTVVRNNQGQNPRGNFRGGRGGGGGGQFQGQRRNPPPGQGQPQQGQGMGQVQQPRQNGQQAQRNPQRQPTGPPQA</sequence>
<feature type="chain" id="PRO_0000255998" description="ATP-dependent RNA helicase DHH1">
    <location>
        <begin position="1"/>
        <end position="522"/>
    </location>
</feature>
<feature type="domain" description="Helicase ATP-binding" evidence="2">
    <location>
        <begin position="80"/>
        <end position="250"/>
    </location>
</feature>
<feature type="domain" description="Helicase C-terminal" evidence="3">
    <location>
        <begin position="260"/>
        <end position="420"/>
    </location>
</feature>
<feature type="region of interest" description="Disordered" evidence="4">
    <location>
        <begin position="427"/>
        <end position="522"/>
    </location>
</feature>
<feature type="short sequence motif" description="Q motif">
    <location>
        <begin position="49"/>
        <end position="77"/>
    </location>
</feature>
<feature type="short sequence motif" description="DEAD box">
    <location>
        <begin position="198"/>
        <end position="201"/>
    </location>
</feature>
<feature type="compositionally biased region" description="Low complexity" evidence="4">
    <location>
        <begin position="430"/>
        <end position="446"/>
    </location>
</feature>
<feature type="compositionally biased region" description="Low complexity" evidence="4">
    <location>
        <begin position="453"/>
        <end position="462"/>
    </location>
</feature>
<feature type="compositionally biased region" description="Gly residues" evidence="4">
    <location>
        <begin position="463"/>
        <end position="475"/>
    </location>
</feature>
<feature type="compositionally biased region" description="Low complexity" evidence="4">
    <location>
        <begin position="487"/>
        <end position="516"/>
    </location>
</feature>
<feature type="binding site" evidence="2">
    <location>
        <begin position="93"/>
        <end position="100"/>
    </location>
    <ligand>
        <name>ATP</name>
        <dbReference type="ChEBI" id="CHEBI:30616"/>
    </ligand>
</feature>
<gene>
    <name type="primary">DHH1</name>
    <name type="ORF">SNOG_12185</name>
</gene>
<name>DHH1_PHANO</name>
<proteinExistence type="inferred from homology"/>